<keyword id="KW-0170">Cobalt</keyword>
<keyword id="KW-0963">Cytoplasm</keyword>
<keyword id="KW-0460">Magnesium</keyword>
<keyword id="KW-0479">Metal-binding</keyword>
<keyword id="KW-0520">NAD</keyword>
<keyword id="KW-0521">NADP</keyword>
<keyword id="KW-0560">Oxidoreductase</keyword>
<keyword id="KW-0664">Pyridoxine biosynthesis</keyword>
<keyword id="KW-0862">Zinc</keyword>
<comment type="function">
    <text evidence="1">Catalyzes the NAD(P)-dependent oxidation of 4-(phosphooxy)-L-threonine (HTP) into 2-amino-3-oxo-4-(phosphooxy)butyric acid which spontaneously decarboxylates to form 3-amino-2-oxopropyl phosphate (AHAP).</text>
</comment>
<comment type="catalytic activity">
    <reaction evidence="1">
        <text>4-(phosphooxy)-L-threonine + NAD(+) = 3-amino-2-oxopropyl phosphate + CO2 + NADH</text>
        <dbReference type="Rhea" id="RHEA:32275"/>
        <dbReference type="ChEBI" id="CHEBI:16526"/>
        <dbReference type="ChEBI" id="CHEBI:57279"/>
        <dbReference type="ChEBI" id="CHEBI:57540"/>
        <dbReference type="ChEBI" id="CHEBI:57945"/>
        <dbReference type="ChEBI" id="CHEBI:58452"/>
        <dbReference type="EC" id="1.1.1.262"/>
    </reaction>
</comment>
<comment type="cofactor">
    <cofactor evidence="1">
        <name>Zn(2+)</name>
        <dbReference type="ChEBI" id="CHEBI:29105"/>
    </cofactor>
    <cofactor evidence="1">
        <name>Mg(2+)</name>
        <dbReference type="ChEBI" id="CHEBI:18420"/>
    </cofactor>
    <cofactor evidence="1">
        <name>Co(2+)</name>
        <dbReference type="ChEBI" id="CHEBI:48828"/>
    </cofactor>
    <text evidence="1">Binds 1 divalent metal cation per subunit. Can use ions such as Zn(2+), Mg(2+) or Co(2+).</text>
</comment>
<comment type="pathway">
    <text evidence="1">Cofactor biosynthesis; pyridoxine 5'-phosphate biosynthesis; pyridoxine 5'-phosphate from D-erythrose 4-phosphate: step 4/5.</text>
</comment>
<comment type="subunit">
    <text evidence="1">Homodimer.</text>
</comment>
<comment type="subcellular location">
    <subcellularLocation>
        <location evidence="1">Cytoplasm</location>
    </subcellularLocation>
</comment>
<comment type="miscellaneous">
    <text evidence="1">The active site is located at the dimer interface.</text>
</comment>
<comment type="similarity">
    <text evidence="1">Belongs to the PdxA family.</text>
</comment>
<dbReference type="EC" id="1.1.1.262" evidence="1"/>
<dbReference type="EMBL" id="CP000901">
    <property type="protein sequence ID" value="ABX85335.1"/>
    <property type="molecule type" value="Genomic_DNA"/>
</dbReference>
<dbReference type="RefSeq" id="WP_002210489.1">
    <property type="nucleotide sequence ID" value="NZ_CP009935.1"/>
</dbReference>
<dbReference type="SMR" id="A9QZY9"/>
<dbReference type="GeneID" id="57974117"/>
<dbReference type="KEGG" id="ypg:YpAngola_A0771"/>
<dbReference type="PATRIC" id="fig|349746.12.peg.1718"/>
<dbReference type="UniPathway" id="UPA00244">
    <property type="reaction ID" value="UER00312"/>
</dbReference>
<dbReference type="GO" id="GO:0005737">
    <property type="term" value="C:cytoplasm"/>
    <property type="evidence" value="ECO:0007669"/>
    <property type="project" value="UniProtKB-SubCell"/>
</dbReference>
<dbReference type="GO" id="GO:0050570">
    <property type="term" value="F:4-hydroxythreonine-4-phosphate dehydrogenase activity"/>
    <property type="evidence" value="ECO:0007669"/>
    <property type="project" value="UniProtKB-UniRule"/>
</dbReference>
<dbReference type="GO" id="GO:0050897">
    <property type="term" value="F:cobalt ion binding"/>
    <property type="evidence" value="ECO:0007669"/>
    <property type="project" value="UniProtKB-UniRule"/>
</dbReference>
<dbReference type="GO" id="GO:0000287">
    <property type="term" value="F:magnesium ion binding"/>
    <property type="evidence" value="ECO:0007669"/>
    <property type="project" value="UniProtKB-UniRule"/>
</dbReference>
<dbReference type="GO" id="GO:0051287">
    <property type="term" value="F:NAD binding"/>
    <property type="evidence" value="ECO:0007669"/>
    <property type="project" value="InterPro"/>
</dbReference>
<dbReference type="GO" id="GO:0008270">
    <property type="term" value="F:zinc ion binding"/>
    <property type="evidence" value="ECO:0007669"/>
    <property type="project" value="UniProtKB-UniRule"/>
</dbReference>
<dbReference type="GO" id="GO:0042823">
    <property type="term" value="P:pyridoxal phosphate biosynthetic process"/>
    <property type="evidence" value="ECO:0007669"/>
    <property type="project" value="UniProtKB-UniRule"/>
</dbReference>
<dbReference type="GO" id="GO:0008615">
    <property type="term" value="P:pyridoxine biosynthetic process"/>
    <property type="evidence" value="ECO:0007669"/>
    <property type="project" value="UniProtKB-UniRule"/>
</dbReference>
<dbReference type="Gene3D" id="3.40.718.10">
    <property type="entry name" value="Isopropylmalate Dehydrogenase"/>
    <property type="match status" value="1"/>
</dbReference>
<dbReference type="HAMAP" id="MF_00536">
    <property type="entry name" value="PdxA"/>
    <property type="match status" value="1"/>
</dbReference>
<dbReference type="InterPro" id="IPR037510">
    <property type="entry name" value="PdxA"/>
</dbReference>
<dbReference type="InterPro" id="IPR005255">
    <property type="entry name" value="PdxA_fam"/>
</dbReference>
<dbReference type="NCBIfam" id="TIGR00557">
    <property type="entry name" value="pdxA"/>
    <property type="match status" value="1"/>
</dbReference>
<dbReference type="PANTHER" id="PTHR30004">
    <property type="entry name" value="4-HYDROXYTHREONINE-4-PHOSPHATE DEHYDROGENASE"/>
    <property type="match status" value="1"/>
</dbReference>
<dbReference type="PANTHER" id="PTHR30004:SF5">
    <property type="entry name" value="4-HYDROXYTHREONINE-4-PHOSPHATE DEHYDROGENASE"/>
    <property type="match status" value="1"/>
</dbReference>
<dbReference type="Pfam" id="PF04166">
    <property type="entry name" value="PdxA"/>
    <property type="match status" value="1"/>
</dbReference>
<dbReference type="SUPFAM" id="SSF53659">
    <property type="entry name" value="Isocitrate/Isopropylmalate dehydrogenase-like"/>
    <property type="match status" value="1"/>
</dbReference>
<organism>
    <name type="scientific">Yersinia pestis bv. Antiqua (strain Angola)</name>
    <dbReference type="NCBI Taxonomy" id="349746"/>
    <lineage>
        <taxon>Bacteria</taxon>
        <taxon>Pseudomonadati</taxon>
        <taxon>Pseudomonadota</taxon>
        <taxon>Gammaproteobacteria</taxon>
        <taxon>Enterobacterales</taxon>
        <taxon>Yersiniaceae</taxon>
        <taxon>Yersinia</taxon>
    </lineage>
</organism>
<evidence type="ECO:0000255" key="1">
    <source>
        <dbReference type="HAMAP-Rule" id="MF_00536"/>
    </source>
</evidence>
<protein>
    <recommendedName>
        <fullName evidence="1">4-hydroxythreonine-4-phosphate dehydrogenase</fullName>
        <ecNumber evidence="1">1.1.1.262</ecNumber>
    </recommendedName>
    <alternativeName>
        <fullName evidence="1">4-(phosphohydroxy)-L-threonine dehydrogenase</fullName>
    </alternativeName>
</protein>
<reference key="1">
    <citation type="journal article" date="2010" name="J. Bacteriol.">
        <title>Genome sequence of the deep-rooted Yersinia pestis strain Angola reveals new insights into the evolution and pangenome of the plague bacterium.</title>
        <authorList>
            <person name="Eppinger M."/>
            <person name="Worsham P.L."/>
            <person name="Nikolich M.P."/>
            <person name="Riley D.R."/>
            <person name="Sebastian Y."/>
            <person name="Mou S."/>
            <person name="Achtman M."/>
            <person name="Lindler L.E."/>
            <person name="Ravel J."/>
        </authorList>
    </citation>
    <scope>NUCLEOTIDE SEQUENCE [LARGE SCALE GENOMIC DNA]</scope>
    <source>
        <strain>Angola</strain>
    </source>
</reference>
<name>PDXA_YERPG</name>
<sequence>MHNHNNRLVITPGEPAGVGPDLAITLAQQDWPVELVVCADPALLLARASQLNLPLQLREYQADQPAIAQQAGSLTILPVKTAVNVVPGKLDVGNSHYVVETLAKACDGAISGEFAALVTGPVQKSIINDAGIPFIGHTEFFADRSHCQRVVMMLATEELRVALATTHLPLLAVPGAITQASLHEVITILDNDLKTKFGITQPQIYVCGLNPHAGEGGHMGHEEIDTIIPALNTLRQQGINLIGPLPADTLFQPKYLQHADAVLAMYHDQGLPVLKYQGFGRAVNITLGLPFIRTSVDHGTALELAATGTADVGSFITALNLAIKMINNSNE</sequence>
<proteinExistence type="inferred from homology"/>
<feature type="chain" id="PRO_1000128269" description="4-hydroxythreonine-4-phosphate dehydrogenase">
    <location>
        <begin position="1"/>
        <end position="331"/>
    </location>
</feature>
<feature type="binding site" evidence="1">
    <location>
        <position position="137"/>
    </location>
    <ligand>
        <name>substrate</name>
    </ligand>
</feature>
<feature type="binding site" evidence="1">
    <location>
        <position position="138"/>
    </location>
    <ligand>
        <name>substrate</name>
    </ligand>
</feature>
<feature type="binding site" evidence="1">
    <location>
        <position position="167"/>
    </location>
    <ligand>
        <name>a divalent metal cation</name>
        <dbReference type="ChEBI" id="CHEBI:60240"/>
        <note>ligand shared between dimeric partners</note>
    </ligand>
</feature>
<feature type="binding site" evidence="1">
    <location>
        <position position="212"/>
    </location>
    <ligand>
        <name>a divalent metal cation</name>
        <dbReference type="ChEBI" id="CHEBI:60240"/>
        <note>ligand shared between dimeric partners</note>
    </ligand>
</feature>
<feature type="binding site" evidence="1">
    <location>
        <position position="267"/>
    </location>
    <ligand>
        <name>a divalent metal cation</name>
        <dbReference type="ChEBI" id="CHEBI:60240"/>
        <note>ligand shared between dimeric partners</note>
    </ligand>
</feature>
<feature type="binding site" evidence="1">
    <location>
        <position position="275"/>
    </location>
    <ligand>
        <name>substrate</name>
    </ligand>
</feature>
<feature type="binding site" evidence="1">
    <location>
        <position position="284"/>
    </location>
    <ligand>
        <name>substrate</name>
    </ligand>
</feature>
<feature type="binding site" evidence="1">
    <location>
        <position position="293"/>
    </location>
    <ligand>
        <name>substrate</name>
    </ligand>
</feature>
<gene>
    <name evidence="1" type="primary">pdxA</name>
    <name type="ordered locus">YpAngola_A0771</name>
</gene>
<accession>A9QZY9</accession>